<name>YL743_MIMIV</name>
<dbReference type="EMBL" id="AY653733">
    <property type="protein sequence ID" value="AAV51003.1"/>
    <property type="molecule type" value="Genomic_DNA"/>
</dbReference>
<dbReference type="KEGG" id="vg:9925400"/>
<dbReference type="Proteomes" id="UP000001134">
    <property type="component" value="Genome"/>
</dbReference>
<organism>
    <name type="scientific">Acanthamoeba polyphaga mimivirus</name>
    <name type="common">APMV</name>
    <dbReference type="NCBI Taxonomy" id="212035"/>
    <lineage>
        <taxon>Viruses</taxon>
        <taxon>Varidnaviria</taxon>
        <taxon>Bamfordvirae</taxon>
        <taxon>Nucleocytoviricota</taxon>
        <taxon>Megaviricetes</taxon>
        <taxon>Imitervirales</taxon>
        <taxon>Mimiviridae</taxon>
        <taxon>Megamimivirinae</taxon>
        <taxon>Mimivirus</taxon>
        <taxon>Mimivirus bradfordmassiliense</taxon>
    </lineage>
</organism>
<organismHost>
    <name type="scientific">Acanthamoeba polyphaga</name>
    <name type="common">Amoeba</name>
    <dbReference type="NCBI Taxonomy" id="5757"/>
</organismHost>
<gene>
    <name type="ordered locus">MIMI_L743</name>
</gene>
<protein>
    <recommendedName>
        <fullName>Uncharacterized protein L743</fullName>
    </recommendedName>
</protein>
<feature type="chain" id="PRO_0000071342" description="Uncharacterized protein L743">
    <location>
        <begin position="1"/>
        <end position="151"/>
    </location>
</feature>
<reference key="1">
    <citation type="journal article" date="2004" name="Science">
        <title>The 1.2-megabase genome sequence of Mimivirus.</title>
        <authorList>
            <person name="Raoult D."/>
            <person name="Audic S."/>
            <person name="Robert C."/>
            <person name="Abergel C."/>
            <person name="Renesto P."/>
            <person name="Ogata H."/>
            <person name="La Scola B."/>
            <person name="Susan M."/>
            <person name="Claverie J.-M."/>
        </authorList>
    </citation>
    <scope>NUCLEOTIDE SEQUENCE [LARGE SCALE GENOMIC DNA]</scope>
    <source>
        <strain>Rowbotham-Bradford</strain>
    </source>
</reference>
<sequence length="151" mass="17899">MGTNYYLYFITKDKYRSRELLECHVGYNNILDGINFLGFLVTFMDDLIVYWKFKNLDHKNPDRFREIILVSNTLTLLCRQLINGETVTSIANLYDILKISVQYLGDEYVFKDEYDKIISTSEVIDIFYCENLHTENFLRDSISGFYISTDF</sequence>
<accession>Q5UNZ5</accession>
<proteinExistence type="predicted"/>
<keyword id="KW-1185">Reference proteome</keyword>